<feature type="chain" id="PRO_0000040650" description="Non-structural protein NS3">
    <location>
        <begin position="1"/>
        <end position="218"/>
    </location>
</feature>
<feature type="chain" id="PRO_0000040651" description="Non-structural protein NS3A">
    <location>
        <begin position="11"/>
        <end position="218"/>
    </location>
</feature>
<dbReference type="EMBL" id="U02713">
    <property type="protein sequence ID" value="AAA21528.1"/>
    <property type="molecule type" value="Genomic_RNA"/>
</dbReference>
<dbReference type="SMR" id="Q64905"/>
<dbReference type="InterPro" id="IPR002565">
    <property type="entry name" value="Orbi_NS3"/>
</dbReference>
<dbReference type="Pfam" id="PF01616">
    <property type="entry name" value="Orbi_NS3"/>
    <property type="match status" value="1"/>
</dbReference>
<protein>
    <recommendedName>
        <fullName>Non-structural protein NS3</fullName>
    </recommendedName>
    <component>
        <recommendedName>
            <fullName>Non-structural protein NS3A</fullName>
        </recommendedName>
    </component>
</protein>
<sequence length="218" mass="23665">MNLASISQSYMSHNENERSIVPYIPPPYHPTAPALAVSASQMETMSLGILNQAMSSSAGASGALKDEKAAFGAVAEALRDPEPIRKIKRQVGIQTLKTLKVELSGMRRKKLILKIIMFICANVTMATSLVGGMSIVDEDIAKHLAFDGKGDWVSKTVHGLNLLCTTMLLAANKISEKVREEIARTKRDIAKRQSYVSAATMSWDGDSVTLLRDVKCGD</sequence>
<name>VNS3_AHSV8</name>
<evidence type="ECO:0000305" key="1"/>
<organismHost>
    <name type="scientific">Camelus dromedarius</name>
    <name type="common">Dromedary</name>
    <name type="synonym">Arabian camel</name>
    <dbReference type="NCBI Taxonomy" id="9838"/>
</organismHost>
<organismHost>
    <name type="scientific">Canis lupus familiaris</name>
    <name type="common">Dog</name>
    <name type="synonym">Canis familiaris</name>
    <dbReference type="NCBI Taxonomy" id="9615"/>
</organismHost>
<organismHost>
    <name type="scientific">Equus asinus</name>
    <name type="common">Donkey</name>
    <name type="synonym">Equus africanus asinus</name>
    <dbReference type="NCBI Taxonomy" id="9793"/>
</organismHost>
<organismHost>
    <name type="scientific">Equus caballus</name>
    <name type="common">Horse</name>
    <dbReference type="NCBI Taxonomy" id="9796"/>
</organismHost>
<organismHost>
    <name type="scientific">Equus hemionus</name>
    <name type="common">Onager</name>
    <name type="synonym">Asian wild ass</name>
    <dbReference type="NCBI Taxonomy" id="9794"/>
</organismHost>
<organismHost>
    <name type="scientific">Equus quagga burchellii</name>
    <name type="common">Burchell's zebra</name>
    <name type="synonym">Equus burchelli</name>
    <dbReference type="NCBI Taxonomy" id="89252"/>
</organismHost>
<organismHost>
    <name type="scientific">Loxodonta africana</name>
    <name type="common">African elephant</name>
    <dbReference type="NCBI Taxonomy" id="9785"/>
</organismHost>
<proteinExistence type="inferred from homology"/>
<reference key="1">
    <citation type="journal article" date="1994" name="Virus Res.">
        <title>Phylogenetic analysis of segment 10 from African horsesickness virus and cognate genes from other orbiviruses.</title>
        <authorList>
            <person name="de Sa R."/>
            <person name="Zellner M."/>
            <person name="Grubman M.J."/>
        </authorList>
    </citation>
    <scope>NUCLEOTIDE SEQUENCE [GENOMIC RNA]</scope>
</reference>
<gene>
    <name type="primary">Segment-10</name>
</gene>
<accession>Q64905</accession>
<comment type="function">
    <text>May play a role in the release of virions from infected cells.</text>
</comment>
<comment type="similarity">
    <text evidence="1">Belongs to the orbivirus NS3 family.</text>
</comment>
<organism>
    <name type="scientific">African horse sickness virus 8</name>
    <name type="common">AHSV-8</name>
    <dbReference type="NCBI Taxonomy" id="86062"/>
    <lineage>
        <taxon>Viruses</taxon>
        <taxon>Riboviria</taxon>
        <taxon>Orthornavirae</taxon>
        <taxon>Duplornaviricota</taxon>
        <taxon>Resentoviricetes</taxon>
        <taxon>Reovirales</taxon>
        <taxon>Sedoreoviridae</taxon>
        <taxon>Orbivirus</taxon>
        <taxon>African horse sickness virus</taxon>
    </lineage>
</organism>